<reference key="1">
    <citation type="journal article" date="2005" name="Proc. Natl. Acad. Sci. U.S.A.">
        <title>Comparison of the complete genome sequences of Pseudomonas syringae pv. syringae B728a and pv. tomato DC3000.</title>
        <authorList>
            <person name="Feil H."/>
            <person name="Feil W.S."/>
            <person name="Chain P."/>
            <person name="Larimer F."/>
            <person name="Dibartolo G."/>
            <person name="Copeland A."/>
            <person name="Lykidis A."/>
            <person name="Trong S."/>
            <person name="Nolan M."/>
            <person name="Goltsman E."/>
            <person name="Thiel J."/>
            <person name="Malfatti S."/>
            <person name="Loper J.E."/>
            <person name="Lapidus A."/>
            <person name="Detter J.C."/>
            <person name="Land M."/>
            <person name="Richardson P.M."/>
            <person name="Kyrpides N.C."/>
            <person name="Ivanova N."/>
            <person name="Lindow S.E."/>
        </authorList>
    </citation>
    <scope>NUCLEOTIDE SEQUENCE [LARGE SCALE GENOMIC DNA]</scope>
    <source>
        <strain>B728a</strain>
    </source>
</reference>
<organism>
    <name type="scientific">Pseudomonas syringae pv. syringae (strain B728a)</name>
    <dbReference type="NCBI Taxonomy" id="205918"/>
    <lineage>
        <taxon>Bacteria</taxon>
        <taxon>Pseudomonadati</taxon>
        <taxon>Pseudomonadota</taxon>
        <taxon>Gammaproteobacteria</taxon>
        <taxon>Pseudomonadales</taxon>
        <taxon>Pseudomonadaceae</taxon>
        <taxon>Pseudomonas</taxon>
        <taxon>Pseudomonas syringae</taxon>
    </lineage>
</organism>
<sequence length="98" mass="11076">MTKSELIERIVTHQGLLSSKDVELAIKTMLEQMSQCLATGDRIEIRGFGSFSLHYRAPRVGRNPKTGQSVSLDGKFVPHFKPGKELRDRVNEDEEEGF</sequence>
<gene>
    <name evidence="1" type="primary">ihfB</name>
    <name evidence="1" type="synonym">himD</name>
    <name type="ordered locus">Psyr_3641</name>
</gene>
<name>IHFB_PSEU2</name>
<dbReference type="EMBL" id="CP000075">
    <property type="protein sequence ID" value="AAY38673.1"/>
    <property type="molecule type" value="Genomic_DNA"/>
</dbReference>
<dbReference type="RefSeq" id="WP_002554561.1">
    <property type="nucleotide sequence ID" value="NC_007005.1"/>
</dbReference>
<dbReference type="RefSeq" id="YP_236711.1">
    <property type="nucleotide sequence ID" value="NC_007005.1"/>
</dbReference>
<dbReference type="SMR" id="Q4ZQ99"/>
<dbReference type="STRING" id="205918.Psyr_3641"/>
<dbReference type="GeneID" id="77279485"/>
<dbReference type="KEGG" id="psb:Psyr_3641"/>
<dbReference type="PATRIC" id="fig|205918.7.peg.3738"/>
<dbReference type="eggNOG" id="COG0776">
    <property type="taxonomic scope" value="Bacteria"/>
</dbReference>
<dbReference type="HOGENOM" id="CLU_105066_2_0_6"/>
<dbReference type="OrthoDB" id="9804203at2"/>
<dbReference type="Proteomes" id="UP000000426">
    <property type="component" value="Chromosome"/>
</dbReference>
<dbReference type="GO" id="GO:0005694">
    <property type="term" value="C:chromosome"/>
    <property type="evidence" value="ECO:0007669"/>
    <property type="project" value="InterPro"/>
</dbReference>
<dbReference type="GO" id="GO:0005829">
    <property type="term" value="C:cytosol"/>
    <property type="evidence" value="ECO:0007669"/>
    <property type="project" value="TreeGrafter"/>
</dbReference>
<dbReference type="GO" id="GO:0003677">
    <property type="term" value="F:DNA binding"/>
    <property type="evidence" value="ECO:0007669"/>
    <property type="project" value="UniProtKB-UniRule"/>
</dbReference>
<dbReference type="GO" id="GO:0030527">
    <property type="term" value="F:structural constituent of chromatin"/>
    <property type="evidence" value="ECO:0007669"/>
    <property type="project" value="InterPro"/>
</dbReference>
<dbReference type="GO" id="GO:0006310">
    <property type="term" value="P:DNA recombination"/>
    <property type="evidence" value="ECO:0007669"/>
    <property type="project" value="UniProtKB-UniRule"/>
</dbReference>
<dbReference type="GO" id="GO:0006355">
    <property type="term" value="P:regulation of DNA-templated transcription"/>
    <property type="evidence" value="ECO:0007669"/>
    <property type="project" value="UniProtKB-UniRule"/>
</dbReference>
<dbReference type="GO" id="GO:0006417">
    <property type="term" value="P:regulation of translation"/>
    <property type="evidence" value="ECO:0007669"/>
    <property type="project" value="UniProtKB-UniRule"/>
</dbReference>
<dbReference type="CDD" id="cd13836">
    <property type="entry name" value="IHF_B"/>
    <property type="match status" value="1"/>
</dbReference>
<dbReference type="FunFam" id="4.10.520.10:FF:000003">
    <property type="entry name" value="Integration host factor subunit beta"/>
    <property type="match status" value="1"/>
</dbReference>
<dbReference type="Gene3D" id="4.10.520.10">
    <property type="entry name" value="IHF-like DNA-binding proteins"/>
    <property type="match status" value="1"/>
</dbReference>
<dbReference type="HAMAP" id="MF_00381">
    <property type="entry name" value="IHF_beta"/>
    <property type="match status" value="1"/>
</dbReference>
<dbReference type="InterPro" id="IPR000119">
    <property type="entry name" value="Hist_DNA-bd"/>
</dbReference>
<dbReference type="InterPro" id="IPR020816">
    <property type="entry name" value="Histone-like_DNA-bd_CS"/>
</dbReference>
<dbReference type="InterPro" id="IPR010992">
    <property type="entry name" value="IHF-like_DNA-bd_dom_sf"/>
</dbReference>
<dbReference type="InterPro" id="IPR005685">
    <property type="entry name" value="IHF_beta"/>
</dbReference>
<dbReference type="NCBIfam" id="TIGR00988">
    <property type="entry name" value="hip"/>
    <property type="match status" value="1"/>
</dbReference>
<dbReference type="NCBIfam" id="NF001222">
    <property type="entry name" value="PRK00199.1"/>
    <property type="match status" value="1"/>
</dbReference>
<dbReference type="PANTHER" id="PTHR33175">
    <property type="entry name" value="DNA-BINDING PROTEIN HU"/>
    <property type="match status" value="1"/>
</dbReference>
<dbReference type="PANTHER" id="PTHR33175:SF5">
    <property type="entry name" value="INTEGRATION HOST FACTOR SUBUNIT BETA"/>
    <property type="match status" value="1"/>
</dbReference>
<dbReference type="Pfam" id="PF00216">
    <property type="entry name" value="Bac_DNA_binding"/>
    <property type="match status" value="1"/>
</dbReference>
<dbReference type="PRINTS" id="PR01727">
    <property type="entry name" value="DNABINDINGHU"/>
</dbReference>
<dbReference type="SMART" id="SM00411">
    <property type="entry name" value="BHL"/>
    <property type="match status" value="1"/>
</dbReference>
<dbReference type="SUPFAM" id="SSF47729">
    <property type="entry name" value="IHF-like DNA-binding proteins"/>
    <property type="match status" value="1"/>
</dbReference>
<dbReference type="PROSITE" id="PS00045">
    <property type="entry name" value="HISTONE_LIKE"/>
    <property type="match status" value="1"/>
</dbReference>
<accession>Q4ZQ99</accession>
<proteinExistence type="inferred from homology"/>
<comment type="function">
    <text evidence="1">This protein is one of the two subunits of integration host factor, a specific DNA-binding protein that functions in genetic recombination as well as in transcriptional and translational control.</text>
</comment>
<comment type="subunit">
    <text evidence="1">Heterodimer of an alpha and a beta chain.</text>
</comment>
<comment type="similarity">
    <text evidence="1">Belongs to the bacterial histone-like protein family.</text>
</comment>
<feature type="chain" id="PRO_1000060637" description="Integration host factor subunit beta">
    <location>
        <begin position="1"/>
        <end position="98"/>
    </location>
</feature>
<keyword id="KW-0233">DNA recombination</keyword>
<keyword id="KW-0238">DNA-binding</keyword>
<keyword id="KW-0804">Transcription</keyword>
<keyword id="KW-0805">Transcription regulation</keyword>
<keyword id="KW-0810">Translation regulation</keyword>
<evidence type="ECO:0000255" key="1">
    <source>
        <dbReference type="HAMAP-Rule" id="MF_00381"/>
    </source>
</evidence>
<protein>
    <recommendedName>
        <fullName evidence="1">Integration host factor subunit beta</fullName>
        <shortName evidence="1">IHF-beta</shortName>
    </recommendedName>
</protein>